<gene>
    <name evidence="1" type="primary">pyrC</name>
    <name type="ordered locus">PSEEN1208</name>
</gene>
<sequence length="348" mass="38473">MSDRLTLLRPDDWHIHLRDGAVLQHTVGDVARTFARAIIMPNLVPPVRNALEAGGYRERILAARPAGSRFEPLMVLYLTDRTSPEDIRAAKASGFVYAAKLYPAGATTNSDSGVTSIDNIFPAIEALAETGMPLLVHGEVTRSEIDVFDREKRFIDEHMRRLVERFPTLKVVFEHITTADAAQFVTEAPANVGATITAQHLLYNRNHMLVGGIRPHFYCLPILKRNTHQVALLDAATSGNPKFFLGTDSAPHAKHAKEAACGCAGCYTAYAAIELYAEAFEQRNALDKLEGFASKHGPDFYGLPRNTDTITLVRDEWTAPDSLPFGDNTVIPLRAGEKLRWRLLEDNA</sequence>
<proteinExistence type="inferred from homology"/>
<accession>Q1IE05</accession>
<reference key="1">
    <citation type="journal article" date="2006" name="Nat. Biotechnol.">
        <title>Complete genome sequence of the entomopathogenic and metabolically versatile soil bacterium Pseudomonas entomophila.</title>
        <authorList>
            <person name="Vodovar N."/>
            <person name="Vallenet D."/>
            <person name="Cruveiller S."/>
            <person name="Rouy Z."/>
            <person name="Barbe V."/>
            <person name="Acosta C."/>
            <person name="Cattolico L."/>
            <person name="Jubin C."/>
            <person name="Lajus A."/>
            <person name="Segurens B."/>
            <person name="Vacherie B."/>
            <person name="Wincker P."/>
            <person name="Weissenbach J."/>
            <person name="Lemaitre B."/>
            <person name="Medigue C."/>
            <person name="Boccard F."/>
        </authorList>
    </citation>
    <scope>NUCLEOTIDE SEQUENCE [LARGE SCALE GENOMIC DNA]</scope>
    <source>
        <strain>L48</strain>
    </source>
</reference>
<feature type="chain" id="PRO_1000024034" description="Dihydroorotase">
    <location>
        <begin position="1"/>
        <end position="348"/>
    </location>
</feature>
<feature type="active site" evidence="1">
    <location>
        <position position="248"/>
    </location>
</feature>
<feature type="binding site" evidence="1">
    <location>
        <position position="14"/>
    </location>
    <ligand>
        <name>Zn(2+)</name>
        <dbReference type="ChEBI" id="CHEBI:29105"/>
        <label>1</label>
    </ligand>
</feature>
<feature type="binding site" evidence="1">
    <location>
        <begin position="16"/>
        <end position="18"/>
    </location>
    <ligand>
        <name>substrate</name>
    </ligand>
</feature>
<feature type="binding site" evidence="1">
    <location>
        <position position="16"/>
    </location>
    <ligand>
        <name>Zn(2+)</name>
        <dbReference type="ChEBI" id="CHEBI:29105"/>
        <label>1</label>
    </ligand>
</feature>
<feature type="binding site" evidence="1">
    <location>
        <position position="42"/>
    </location>
    <ligand>
        <name>substrate</name>
    </ligand>
</feature>
<feature type="binding site" description="via carbamate group" evidence="1">
    <location>
        <position position="100"/>
    </location>
    <ligand>
        <name>Zn(2+)</name>
        <dbReference type="ChEBI" id="CHEBI:29105"/>
        <label>1</label>
    </ligand>
</feature>
<feature type="binding site" description="via carbamate group" evidence="1">
    <location>
        <position position="100"/>
    </location>
    <ligand>
        <name>Zn(2+)</name>
        <dbReference type="ChEBI" id="CHEBI:29105"/>
        <label>2</label>
    </ligand>
</feature>
<feature type="binding site" evidence="1">
    <location>
        <position position="137"/>
    </location>
    <ligand>
        <name>substrate</name>
    </ligand>
</feature>
<feature type="binding site" evidence="1">
    <location>
        <position position="137"/>
    </location>
    <ligand>
        <name>Zn(2+)</name>
        <dbReference type="ChEBI" id="CHEBI:29105"/>
        <label>2</label>
    </ligand>
</feature>
<feature type="binding site" evidence="1">
    <location>
        <position position="175"/>
    </location>
    <ligand>
        <name>Zn(2+)</name>
        <dbReference type="ChEBI" id="CHEBI:29105"/>
        <label>2</label>
    </ligand>
</feature>
<feature type="binding site" evidence="1">
    <location>
        <position position="220"/>
    </location>
    <ligand>
        <name>substrate</name>
    </ligand>
</feature>
<feature type="binding site" evidence="1">
    <location>
        <position position="248"/>
    </location>
    <ligand>
        <name>Zn(2+)</name>
        <dbReference type="ChEBI" id="CHEBI:29105"/>
        <label>1</label>
    </ligand>
</feature>
<feature type="binding site" evidence="1">
    <location>
        <position position="252"/>
    </location>
    <ligand>
        <name>substrate</name>
    </ligand>
</feature>
<feature type="binding site" evidence="1">
    <location>
        <position position="264"/>
    </location>
    <ligand>
        <name>substrate</name>
    </ligand>
</feature>
<feature type="modified residue" description="N6-carboxylysine" evidence="1">
    <location>
        <position position="100"/>
    </location>
</feature>
<protein>
    <recommendedName>
        <fullName evidence="1">Dihydroorotase</fullName>
        <shortName evidence="1">DHOase</shortName>
        <ecNumber evidence="1">3.5.2.3</ecNumber>
    </recommendedName>
</protein>
<name>PYRC_PSEE4</name>
<dbReference type="EC" id="3.5.2.3" evidence="1"/>
<dbReference type="EMBL" id="CT573326">
    <property type="protein sequence ID" value="CAK14103.1"/>
    <property type="molecule type" value="Genomic_DNA"/>
</dbReference>
<dbReference type="RefSeq" id="WP_011532522.1">
    <property type="nucleotide sequence ID" value="NC_008027.1"/>
</dbReference>
<dbReference type="SMR" id="Q1IE05"/>
<dbReference type="STRING" id="384676.PSEEN1208"/>
<dbReference type="GeneID" id="32804490"/>
<dbReference type="KEGG" id="pen:PSEEN1208"/>
<dbReference type="eggNOG" id="COG0418">
    <property type="taxonomic scope" value="Bacteria"/>
</dbReference>
<dbReference type="HOGENOM" id="CLU_041558_1_0_6"/>
<dbReference type="OrthoDB" id="9808095at2"/>
<dbReference type="UniPathway" id="UPA00070">
    <property type="reaction ID" value="UER00117"/>
</dbReference>
<dbReference type="Proteomes" id="UP000000658">
    <property type="component" value="Chromosome"/>
</dbReference>
<dbReference type="GO" id="GO:0005829">
    <property type="term" value="C:cytosol"/>
    <property type="evidence" value="ECO:0007669"/>
    <property type="project" value="TreeGrafter"/>
</dbReference>
<dbReference type="GO" id="GO:0004151">
    <property type="term" value="F:dihydroorotase activity"/>
    <property type="evidence" value="ECO:0007669"/>
    <property type="project" value="UniProtKB-UniRule"/>
</dbReference>
<dbReference type="GO" id="GO:0008270">
    <property type="term" value="F:zinc ion binding"/>
    <property type="evidence" value="ECO:0007669"/>
    <property type="project" value="UniProtKB-UniRule"/>
</dbReference>
<dbReference type="GO" id="GO:0006207">
    <property type="term" value="P:'de novo' pyrimidine nucleobase biosynthetic process"/>
    <property type="evidence" value="ECO:0007669"/>
    <property type="project" value="TreeGrafter"/>
</dbReference>
<dbReference type="GO" id="GO:0044205">
    <property type="term" value="P:'de novo' UMP biosynthetic process"/>
    <property type="evidence" value="ECO:0007669"/>
    <property type="project" value="UniProtKB-UniRule"/>
</dbReference>
<dbReference type="CDD" id="cd01294">
    <property type="entry name" value="DHOase"/>
    <property type="match status" value="1"/>
</dbReference>
<dbReference type="FunFam" id="3.20.20.140:FF:000006">
    <property type="entry name" value="Dihydroorotase"/>
    <property type="match status" value="1"/>
</dbReference>
<dbReference type="Gene3D" id="3.20.20.140">
    <property type="entry name" value="Metal-dependent hydrolases"/>
    <property type="match status" value="1"/>
</dbReference>
<dbReference type="HAMAP" id="MF_00219">
    <property type="entry name" value="PyrC_classII"/>
    <property type="match status" value="1"/>
</dbReference>
<dbReference type="InterPro" id="IPR006680">
    <property type="entry name" value="Amidohydro-rel"/>
</dbReference>
<dbReference type="InterPro" id="IPR004721">
    <property type="entry name" value="DHOdimr"/>
</dbReference>
<dbReference type="InterPro" id="IPR002195">
    <property type="entry name" value="Dihydroorotase_CS"/>
</dbReference>
<dbReference type="InterPro" id="IPR032466">
    <property type="entry name" value="Metal_Hydrolase"/>
</dbReference>
<dbReference type="NCBIfam" id="TIGR00856">
    <property type="entry name" value="pyrC_dimer"/>
    <property type="match status" value="1"/>
</dbReference>
<dbReference type="PANTHER" id="PTHR43137">
    <property type="entry name" value="DIHYDROOROTASE"/>
    <property type="match status" value="1"/>
</dbReference>
<dbReference type="PANTHER" id="PTHR43137:SF1">
    <property type="entry name" value="DIHYDROOROTASE"/>
    <property type="match status" value="1"/>
</dbReference>
<dbReference type="Pfam" id="PF01979">
    <property type="entry name" value="Amidohydro_1"/>
    <property type="match status" value="1"/>
</dbReference>
<dbReference type="PIRSF" id="PIRSF001237">
    <property type="entry name" value="DHOdimr"/>
    <property type="match status" value="1"/>
</dbReference>
<dbReference type="SUPFAM" id="SSF51556">
    <property type="entry name" value="Metallo-dependent hydrolases"/>
    <property type="match status" value="1"/>
</dbReference>
<dbReference type="PROSITE" id="PS00482">
    <property type="entry name" value="DIHYDROOROTASE_1"/>
    <property type="match status" value="1"/>
</dbReference>
<dbReference type="PROSITE" id="PS00483">
    <property type="entry name" value="DIHYDROOROTASE_2"/>
    <property type="match status" value="1"/>
</dbReference>
<comment type="function">
    <text evidence="1">Catalyzes the reversible cyclization of carbamoyl aspartate to dihydroorotate.</text>
</comment>
<comment type="catalytic activity">
    <reaction evidence="1">
        <text>(S)-dihydroorotate + H2O = N-carbamoyl-L-aspartate + H(+)</text>
        <dbReference type="Rhea" id="RHEA:24296"/>
        <dbReference type="ChEBI" id="CHEBI:15377"/>
        <dbReference type="ChEBI" id="CHEBI:15378"/>
        <dbReference type="ChEBI" id="CHEBI:30864"/>
        <dbReference type="ChEBI" id="CHEBI:32814"/>
        <dbReference type="EC" id="3.5.2.3"/>
    </reaction>
</comment>
<comment type="cofactor">
    <cofactor evidence="1">
        <name>Zn(2+)</name>
        <dbReference type="ChEBI" id="CHEBI:29105"/>
    </cofactor>
    <text evidence="1">Binds 2 Zn(2+) ions per subunit.</text>
</comment>
<comment type="pathway">
    <text evidence="1">Pyrimidine metabolism; UMP biosynthesis via de novo pathway; (S)-dihydroorotate from bicarbonate: step 3/3.</text>
</comment>
<comment type="subunit">
    <text evidence="1">Homodimer.</text>
</comment>
<comment type="similarity">
    <text evidence="1">Belongs to the metallo-dependent hydrolases superfamily. DHOase family. Class II DHOase subfamily.</text>
</comment>
<keyword id="KW-0378">Hydrolase</keyword>
<keyword id="KW-0479">Metal-binding</keyword>
<keyword id="KW-0665">Pyrimidine biosynthesis</keyword>
<keyword id="KW-0862">Zinc</keyword>
<organism>
    <name type="scientific">Pseudomonas entomophila (strain L48)</name>
    <dbReference type="NCBI Taxonomy" id="384676"/>
    <lineage>
        <taxon>Bacteria</taxon>
        <taxon>Pseudomonadati</taxon>
        <taxon>Pseudomonadota</taxon>
        <taxon>Gammaproteobacteria</taxon>
        <taxon>Pseudomonadales</taxon>
        <taxon>Pseudomonadaceae</taxon>
        <taxon>Pseudomonas</taxon>
    </lineage>
</organism>
<evidence type="ECO:0000255" key="1">
    <source>
        <dbReference type="HAMAP-Rule" id="MF_00219"/>
    </source>
</evidence>